<comment type="function">
    <text evidence="1">Catalyzes the interconversion of beta-pyran and beta-furan forms of D-ribose.</text>
</comment>
<comment type="catalytic activity">
    <reaction evidence="1">
        <text>beta-D-ribopyranose = beta-D-ribofuranose</text>
        <dbReference type="Rhea" id="RHEA:25432"/>
        <dbReference type="ChEBI" id="CHEBI:27476"/>
        <dbReference type="ChEBI" id="CHEBI:47002"/>
        <dbReference type="EC" id="5.4.99.62"/>
    </reaction>
</comment>
<comment type="pathway">
    <text evidence="1">Carbohydrate metabolism; D-ribose degradation; D-ribose 5-phosphate from beta-D-ribopyranose: step 1/2.</text>
</comment>
<comment type="subunit">
    <text evidence="1">Homodecamer.</text>
</comment>
<comment type="subcellular location">
    <subcellularLocation>
        <location evidence="1">Cytoplasm</location>
    </subcellularLocation>
</comment>
<comment type="similarity">
    <text evidence="1">Belongs to the RbsD / FucU family. RbsD subfamily.</text>
</comment>
<gene>
    <name evidence="1" type="primary">rbsD</name>
    <name type="ordered locus">BCAH187_A0795</name>
</gene>
<organism>
    <name type="scientific">Bacillus cereus (strain AH187)</name>
    <dbReference type="NCBI Taxonomy" id="405534"/>
    <lineage>
        <taxon>Bacteria</taxon>
        <taxon>Bacillati</taxon>
        <taxon>Bacillota</taxon>
        <taxon>Bacilli</taxon>
        <taxon>Bacillales</taxon>
        <taxon>Bacillaceae</taxon>
        <taxon>Bacillus</taxon>
        <taxon>Bacillus cereus group</taxon>
    </lineage>
</organism>
<reference key="1">
    <citation type="submission" date="2008-10" db="EMBL/GenBank/DDBJ databases">
        <title>Genome sequence of Bacillus cereus AH187.</title>
        <authorList>
            <person name="Dodson R.J."/>
            <person name="Durkin A.S."/>
            <person name="Rosovitz M.J."/>
            <person name="Rasko D.A."/>
            <person name="Kolsto A.B."/>
            <person name="Okstad O.A."/>
            <person name="Ravel J."/>
            <person name="Sutton G."/>
        </authorList>
    </citation>
    <scope>NUCLEOTIDE SEQUENCE [LARGE SCALE GENOMIC DNA]</scope>
    <source>
        <strain>AH187</strain>
    </source>
</reference>
<accession>B7HW89</accession>
<dbReference type="EC" id="5.4.99.62" evidence="1"/>
<dbReference type="EMBL" id="CP001177">
    <property type="protein sequence ID" value="ACJ82534.1"/>
    <property type="molecule type" value="Genomic_DNA"/>
</dbReference>
<dbReference type="SMR" id="B7HW89"/>
<dbReference type="KEGG" id="bcr:BCAH187_A0795"/>
<dbReference type="HOGENOM" id="CLU_135498_0_0_9"/>
<dbReference type="UniPathway" id="UPA00916">
    <property type="reaction ID" value="UER00888"/>
</dbReference>
<dbReference type="Proteomes" id="UP000002214">
    <property type="component" value="Chromosome"/>
</dbReference>
<dbReference type="GO" id="GO:0005829">
    <property type="term" value="C:cytosol"/>
    <property type="evidence" value="ECO:0007669"/>
    <property type="project" value="TreeGrafter"/>
</dbReference>
<dbReference type="GO" id="GO:0062193">
    <property type="term" value="F:D-ribose pyranase activity"/>
    <property type="evidence" value="ECO:0007669"/>
    <property type="project" value="UniProtKB-EC"/>
</dbReference>
<dbReference type="GO" id="GO:0016872">
    <property type="term" value="F:intramolecular lyase activity"/>
    <property type="evidence" value="ECO:0007669"/>
    <property type="project" value="UniProtKB-UniRule"/>
</dbReference>
<dbReference type="GO" id="GO:0048029">
    <property type="term" value="F:monosaccharide binding"/>
    <property type="evidence" value="ECO:0007669"/>
    <property type="project" value="InterPro"/>
</dbReference>
<dbReference type="GO" id="GO:0019303">
    <property type="term" value="P:D-ribose catabolic process"/>
    <property type="evidence" value="ECO:0007669"/>
    <property type="project" value="UniProtKB-UniRule"/>
</dbReference>
<dbReference type="FunFam" id="3.40.1650.10:FF:000003">
    <property type="entry name" value="D-ribose pyranase"/>
    <property type="match status" value="1"/>
</dbReference>
<dbReference type="Gene3D" id="3.40.1650.10">
    <property type="entry name" value="RbsD-like domain"/>
    <property type="match status" value="1"/>
</dbReference>
<dbReference type="HAMAP" id="MF_01661">
    <property type="entry name" value="D_rib_pyranase"/>
    <property type="match status" value="1"/>
</dbReference>
<dbReference type="InterPro" id="IPR023064">
    <property type="entry name" value="D-ribose_pyranase"/>
</dbReference>
<dbReference type="InterPro" id="IPR023750">
    <property type="entry name" value="RbsD-like_sf"/>
</dbReference>
<dbReference type="InterPro" id="IPR007721">
    <property type="entry name" value="RbsD_FucU"/>
</dbReference>
<dbReference type="NCBIfam" id="NF008761">
    <property type="entry name" value="PRK11797.1"/>
    <property type="match status" value="1"/>
</dbReference>
<dbReference type="PANTHER" id="PTHR37831">
    <property type="entry name" value="D-RIBOSE PYRANASE"/>
    <property type="match status" value="1"/>
</dbReference>
<dbReference type="PANTHER" id="PTHR37831:SF1">
    <property type="entry name" value="D-RIBOSE PYRANASE"/>
    <property type="match status" value="1"/>
</dbReference>
<dbReference type="Pfam" id="PF05025">
    <property type="entry name" value="RbsD_FucU"/>
    <property type="match status" value="1"/>
</dbReference>
<dbReference type="SUPFAM" id="SSF102546">
    <property type="entry name" value="RbsD-like"/>
    <property type="match status" value="1"/>
</dbReference>
<sequence length="131" mass="14255">MKKHGVLNSEIAAVLASLGHTDTIVIADCGLPIPDGVKRIDLAVEIGKPSFLDVLQVVADDMAIEKVTLAEEVINNNAEVNKEIELKLIEPAFEYVSHEQFKEHTKKAKAIIRTGEATPYANVILHAGVIF</sequence>
<evidence type="ECO:0000255" key="1">
    <source>
        <dbReference type="HAMAP-Rule" id="MF_01661"/>
    </source>
</evidence>
<name>RBSD_BACC7</name>
<feature type="chain" id="PRO_1000187134" description="D-ribose pyranase">
    <location>
        <begin position="1"/>
        <end position="131"/>
    </location>
</feature>
<feature type="active site" description="Proton donor" evidence="1">
    <location>
        <position position="20"/>
    </location>
</feature>
<feature type="binding site" evidence="1">
    <location>
        <position position="28"/>
    </location>
    <ligand>
        <name>substrate</name>
    </ligand>
</feature>
<feature type="binding site" evidence="1">
    <location>
        <position position="98"/>
    </location>
    <ligand>
        <name>substrate</name>
    </ligand>
</feature>
<feature type="binding site" evidence="1">
    <location>
        <begin position="120"/>
        <end position="122"/>
    </location>
    <ligand>
        <name>substrate</name>
    </ligand>
</feature>
<keyword id="KW-0119">Carbohydrate metabolism</keyword>
<keyword id="KW-0963">Cytoplasm</keyword>
<keyword id="KW-0413">Isomerase</keyword>
<proteinExistence type="inferred from homology"/>
<protein>
    <recommendedName>
        <fullName evidence="1">D-ribose pyranase</fullName>
        <ecNumber evidence="1">5.4.99.62</ecNumber>
    </recommendedName>
</protein>